<accession>A5GU97</accession>
<evidence type="ECO:0000255" key="1">
    <source>
        <dbReference type="HAMAP-Rule" id="MF_00279"/>
    </source>
</evidence>
<comment type="function">
    <text evidence="1">Catalyzes the complicated ring closure reaction between the two acyclic compounds 1-deoxy-D-xylulose-5-phosphate (DXP) and 3-amino-2-oxopropyl phosphate (1-amino-acetone-3-phosphate or AAP) to form pyridoxine 5'-phosphate (PNP) and inorganic phosphate.</text>
</comment>
<comment type="catalytic activity">
    <reaction evidence="1">
        <text>3-amino-2-oxopropyl phosphate + 1-deoxy-D-xylulose 5-phosphate = pyridoxine 5'-phosphate + phosphate + 2 H2O + H(+)</text>
        <dbReference type="Rhea" id="RHEA:15265"/>
        <dbReference type="ChEBI" id="CHEBI:15377"/>
        <dbReference type="ChEBI" id="CHEBI:15378"/>
        <dbReference type="ChEBI" id="CHEBI:43474"/>
        <dbReference type="ChEBI" id="CHEBI:57279"/>
        <dbReference type="ChEBI" id="CHEBI:57792"/>
        <dbReference type="ChEBI" id="CHEBI:58589"/>
        <dbReference type="EC" id="2.6.99.2"/>
    </reaction>
</comment>
<comment type="pathway">
    <text evidence="1">Cofactor biosynthesis; pyridoxine 5'-phosphate biosynthesis; pyridoxine 5'-phosphate from D-erythrose 4-phosphate: step 5/5.</text>
</comment>
<comment type="subunit">
    <text evidence="1">Homooctamer; tetramer of dimers.</text>
</comment>
<comment type="subcellular location">
    <subcellularLocation>
        <location evidence="1">Cytoplasm</location>
    </subcellularLocation>
</comment>
<comment type="similarity">
    <text evidence="1">Belongs to the PNP synthase family.</text>
</comment>
<dbReference type="EC" id="2.6.99.2" evidence="1"/>
<dbReference type="EMBL" id="CT978603">
    <property type="protein sequence ID" value="CAK28456.1"/>
    <property type="molecule type" value="Genomic_DNA"/>
</dbReference>
<dbReference type="SMR" id="A5GU97"/>
<dbReference type="STRING" id="316278.SynRCC307_1553"/>
<dbReference type="KEGG" id="syr:SynRCC307_1553"/>
<dbReference type="eggNOG" id="COG0854">
    <property type="taxonomic scope" value="Bacteria"/>
</dbReference>
<dbReference type="HOGENOM" id="CLU_074563_0_0_3"/>
<dbReference type="OrthoDB" id="9806590at2"/>
<dbReference type="UniPathway" id="UPA00244">
    <property type="reaction ID" value="UER00313"/>
</dbReference>
<dbReference type="Proteomes" id="UP000001115">
    <property type="component" value="Chromosome"/>
</dbReference>
<dbReference type="GO" id="GO:0005829">
    <property type="term" value="C:cytosol"/>
    <property type="evidence" value="ECO:0007669"/>
    <property type="project" value="TreeGrafter"/>
</dbReference>
<dbReference type="GO" id="GO:0033856">
    <property type="term" value="F:pyridoxine 5'-phosphate synthase activity"/>
    <property type="evidence" value="ECO:0007669"/>
    <property type="project" value="UniProtKB-EC"/>
</dbReference>
<dbReference type="GO" id="GO:0008615">
    <property type="term" value="P:pyridoxine biosynthetic process"/>
    <property type="evidence" value="ECO:0007669"/>
    <property type="project" value="UniProtKB-UniRule"/>
</dbReference>
<dbReference type="CDD" id="cd00003">
    <property type="entry name" value="PNPsynthase"/>
    <property type="match status" value="1"/>
</dbReference>
<dbReference type="Gene3D" id="3.20.20.70">
    <property type="entry name" value="Aldolase class I"/>
    <property type="match status" value="1"/>
</dbReference>
<dbReference type="HAMAP" id="MF_00279">
    <property type="entry name" value="PdxJ"/>
    <property type="match status" value="1"/>
</dbReference>
<dbReference type="InterPro" id="IPR013785">
    <property type="entry name" value="Aldolase_TIM"/>
</dbReference>
<dbReference type="InterPro" id="IPR004569">
    <property type="entry name" value="PyrdxlP_synth_PdxJ"/>
</dbReference>
<dbReference type="InterPro" id="IPR036130">
    <property type="entry name" value="Pyridoxine-5'_phos_synth"/>
</dbReference>
<dbReference type="NCBIfam" id="TIGR00559">
    <property type="entry name" value="pdxJ"/>
    <property type="match status" value="1"/>
</dbReference>
<dbReference type="NCBIfam" id="NF003623">
    <property type="entry name" value="PRK05265.1-1"/>
    <property type="match status" value="1"/>
</dbReference>
<dbReference type="NCBIfam" id="NF003625">
    <property type="entry name" value="PRK05265.1-3"/>
    <property type="match status" value="1"/>
</dbReference>
<dbReference type="NCBIfam" id="NF003627">
    <property type="entry name" value="PRK05265.1-5"/>
    <property type="match status" value="1"/>
</dbReference>
<dbReference type="PANTHER" id="PTHR30456">
    <property type="entry name" value="PYRIDOXINE 5'-PHOSPHATE SYNTHASE"/>
    <property type="match status" value="1"/>
</dbReference>
<dbReference type="PANTHER" id="PTHR30456:SF0">
    <property type="entry name" value="PYRIDOXINE 5'-PHOSPHATE SYNTHASE"/>
    <property type="match status" value="1"/>
</dbReference>
<dbReference type="Pfam" id="PF03740">
    <property type="entry name" value="PdxJ"/>
    <property type="match status" value="1"/>
</dbReference>
<dbReference type="SUPFAM" id="SSF63892">
    <property type="entry name" value="Pyridoxine 5'-phosphate synthase"/>
    <property type="match status" value="1"/>
</dbReference>
<reference key="1">
    <citation type="submission" date="2006-05" db="EMBL/GenBank/DDBJ databases">
        <authorList>
            <consortium name="Genoscope"/>
        </authorList>
    </citation>
    <scope>NUCLEOTIDE SEQUENCE [LARGE SCALE GENOMIC DNA]</scope>
    <source>
        <strain>RCC307</strain>
    </source>
</reference>
<protein>
    <recommendedName>
        <fullName evidence="1">Pyridoxine 5'-phosphate synthase</fullName>
        <shortName evidence="1">PNP synthase</shortName>
        <ecNumber evidence="1">2.6.99.2</ecNumber>
    </recommendedName>
</protein>
<keyword id="KW-0963">Cytoplasm</keyword>
<keyword id="KW-0664">Pyridoxine biosynthesis</keyword>
<keyword id="KW-1185">Reference proteome</keyword>
<keyword id="KW-0808">Transferase</keyword>
<name>PDXJ_SYNR3</name>
<organism>
    <name type="scientific">Synechococcus sp. (strain RCC307)</name>
    <dbReference type="NCBI Taxonomy" id="316278"/>
    <lineage>
        <taxon>Bacteria</taxon>
        <taxon>Bacillati</taxon>
        <taxon>Cyanobacteriota</taxon>
        <taxon>Cyanophyceae</taxon>
        <taxon>Synechococcales</taxon>
        <taxon>Synechococcaceae</taxon>
        <taxon>Synechococcus</taxon>
    </lineage>
</organism>
<proteinExistence type="inferred from homology"/>
<feature type="chain" id="PRO_1000022409" description="Pyridoxine 5'-phosphate synthase">
    <location>
        <begin position="1"/>
        <end position="252"/>
    </location>
</feature>
<feature type="active site" description="Proton acceptor" evidence="1">
    <location>
        <position position="43"/>
    </location>
</feature>
<feature type="active site" description="Proton acceptor" evidence="1">
    <location>
        <position position="70"/>
    </location>
</feature>
<feature type="active site" description="Proton donor" evidence="1">
    <location>
        <position position="190"/>
    </location>
</feature>
<feature type="binding site" evidence="1">
    <location>
        <position position="7"/>
    </location>
    <ligand>
        <name>3-amino-2-oxopropyl phosphate</name>
        <dbReference type="ChEBI" id="CHEBI:57279"/>
    </ligand>
</feature>
<feature type="binding site" evidence="1">
    <location>
        <begin position="9"/>
        <end position="10"/>
    </location>
    <ligand>
        <name>1-deoxy-D-xylulose 5-phosphate</name>
        <dbReference type="ChEBI" id="CHEBI:57792"/>
    </ligand>
</feature>
<feature type="binding site" evidence="1">
    <location>
        <position position="18"/>
    </location>
    <ligand>
        <name>3-amino-2-oxopropyl phosphate</name>
        <dbReference type="ChEBI" id="CHEBI:57279"/>
    </ligand>
</feature>
<feature type="binding site" evidence="1">
    <location>
        <position position="45"/>
    </location>
    <ligand>
        <name>1-deoxy-D-xylulose 5-phosphate</name>
        <dbReference type="ChEBI" id="CHEBI:57792"/>
    </ligand>
</feature>
<feature type="binding site" evidence="1">
    <location>
        <position position="50"/>
    </location>
    <ligand>
        <name>1-deoxy-D-xylulose 5-phosphate</name>
        <dbReference type="ChEBI" id="CHEBI:57792"/>
    </ligand>
</feature>
<feature type="binding site" evidence="1">
    <location>
        <position position="100"/>
    </location>
    <ligand>
        <name>1-deoxy-D-xylulose 5-phosphate</name>
        <dbReference type="ChEBI" id="CHEBI:57792"/>
    </ligand>
</feature>
<feature type="binding site" evidence="1">
    <location>
        <position position="191"/>
    </location>
    <ligand>
        <name>3-amino-2-oxopropyl phosphate</name>
        <dbReference type="ChEBI" id="CHEBI:57279"/>
    </ligand>
</feature>
<feature type="binding site" evidence="1">
    <location>
        <begin position="212"/>
        <end position="213"/>
    </location>
    <ligand>
        <name>3-amino-2-oxopropyl phosphate</name>
        <dbReference type="ChEBI" id="CHEBI:57279"/>
    </ligand>
</feature>
<feature type="site" description="Transition state stabilizer" evidence="1">
    <location>
        <position position="151"/>
    </location>
</feature>
<gene>
    <name evidence="1" type="primary">pdxJ</name>
    <name type="ordered locus">SynRCC307_1553</name>
</gene>
<sequence>MASLGINLDHIATVRQARRTVEPDPVHLALLAELGGADGITVHLREDRRHIQDRDVELLRQTVRTRLNLEMAATAEMVAIALTIKPDMVTLVPEKRQEVTTEGGLDVVSQAAALQGQISQLQGAGIPVSLFVDPERAQLQASQRSGARWVELHTGSYAEASWSQQPLELARLIEGTTEARQLGLRVNAGHGLTYQNVEPIAAISGMEELNIGHTVMARAMAVGLQEAVKQMKELVSAPRQEPLFGAGLAAES</sequence>